<keyword id="KW-0963">Cytoplasm</keyword>
<keyword id="KW-0274">FAD</keyword>
<keyword id="KW-0285">Flavoprotein</keyword>
<keyword id="KW-0288">FMN</keyword>
<keyword id="KW-0496">Mitochondrion</keyword>
<keyword id="KW-0521">NADP</keyword>
<keyword id="KW-0560">Oxidoreductase</keyword>
<keyword id="KW-1185">Reference proteome</keyword>
<reference key="1">
    <citation type="journal article" date="2006" name="Nature">
        <title>Insights from the genome of the biotrophic fungal plant pathogen Ustilago maydis.</title>
        <authorList>
            <person name="Kaemper J."/>
            <person name="Kahmann R."/>
            <person name="Boelker M."/>
            <person name="Ma L.-J."/>
            <person name="Brefort T."/>
            <person name="Saville B.J."/>
            <person name="Banuett F."/>
            <person name="Kronstad J.W."/>
            <person name="Gold S.E."/>
            <person name="Mueller O."/>
            <person name="Perlin M.H."/>
            <person name="Woesten H.A.B."/>
            <person name="de Vries R."/>
            <person name="Ruiz-Herrera J."/>
            <person name="Reynaga-Pena C.G."/>
            <person name="Snetselaar K."/>
            <person name="McCann M."/>
            <person name="Perez-Martin J."/>
            <person name="Feldbruegge M."/>
            <person name="Basse C.W."/>
            <person name="Steinberg G."/>
            <person name="Ibeas J.I."/>
            <person name="Holloman W."/>
            <person name="Guzman P."/>
            <person name="Farman M.L."/>
            <person name="Stajich J.E."/>
            <person name="Sentandreu R."/>
            <person name="Gonzalez-Prieto J.M."/>
            <person name="Kennell J.C."/>
            <person name="Molina L."/>
            <person name="Schirawski J."/>
            <person name="Mendoza-Mendoza A."/>
            <person name="Greilinger D."/>
            <person name="Muench K."/>
            <person name="Roessel N."/>
            <person name="Scherer M."/>
            <person name="Vranes M."/>
            <person name="Ladendorf O."/>
            <person name="Vincon V."/>
            <person name="Fuchs U."/>
            <person name="Sandrock B."/>
            <person name="Meng S."/>
            <person name="Ho E.C.H."/>
            <person name="Cahill M.J."/>
            <person name="Boyce K.J."/>
            <person name="Klose J."/>
            <person name="Klosterman S.J."/>
            <person name="Deelstra H.J."/>
            <person name="Ortiz-Castellanos L."/>
            <person name="Li W."/>
            <person name="Sanchez-Alonso P."/>
            <person name="Schreier P.H."/>
            <person name="Haeuser-Hahn I."/>
            <person name="Vaupel M."/>
            <person name="Koopmann E."/>
            <person name="Friedrich G."/>
            <person name="Voss H."/>
            <person name="Schlueter T."/>
            <person name="Margolis J."/>
            <person name="Platt D."/>
            <person name="Swimmer C."/>
            <person name="Gnirke A."/>
            <person name="Chen F."/>
            <person name="Vysotskaia V."/>
            <person name="Mannhaupt G."/>
            <person name="Gueldener U."/>
            <person name="Muensterkoetter M."/>
            <person name="Haase D."/>
            <person name="Oesterheld M."/>
            <person name="Mewes H.-W."/>
            <person name="Mauceli E.W."/>
            <person name="DeCaprio D."/>
            <person name="Wade C.M."/>
            <person name="Butler J."/>
            <person name="Young S.K."/>
            <person name="Jaffe D.B."/>
            <person name="Calvo S.E."/>
            <person name="Nusbaum C."/>
            <person name="Galagan J.E."/>
            <person name="Birren B.W."/>
        </authorList>
    </citation>
    <scope>NUCLEOTIDE SEQUENCE [LARGE SCALE GENOMIC DNA]</scope>
    <source>
        <strain>DSM 14603 / FGSC 9021 / UM521</strain>
    </source>
</reference>
<reference key="2">
    <citation type="submission" date="2014-09" db="EMBL/GenBank/DDBJ databases">
        <authorList>
            <person name="Gueldener U."/>
            <person name="Muensterkoetter M."/>
            <person name="Walter M.C."/>
            <person name="Mannhaupt G."/>
            <person name="Kahmann R."/>
        </authorList>
    </citation>
    <scope>GENOME REANNOTATION</scope>
    <source>
        <strain>DSM 14603 / FGSC 9021 / UM521</strain>
    </source>
</reference>
<evidence type="ECO:0000255" key="1">
    <source>
        <dbReference type="HAMAP-Rule" id="MF_03178"/>
    </source>
</evidence>
<organism>
    <name type="scientific">Mycosarcoma maydis</name>
    <name type="common">Corn smut fungus</name>
    <name type="synonym">Ustilago maydis</name>
    <dbReference type="NCBI Taxonomy" id="5270"/>
    <lineage>
        <taxon>Eukaryota</taxon>
        <taxon>Fungi</taxon>
        <taxon>Dikarya</taxon>
        <taxon>Basidiomycota</taxon>
        <taxon>Ustilaginomycotina</taxon>
        <taxon>Ustilaginomycetes</taxon>
        <taxon>Ustilaginales</taxon>
        <taxon>Ustilaginaceae</taxon>
        <taxon>Mycosarcoma</taxon>
    </lineage>
</organism>
<proteinExistence type="inferred from homology"/>
<dbReference type="EC" id="1.18.1.-" evidence="1"/>
<dbReference type="EMBL" id="CM003158">
    <property type="protein sequence ID" value="KIS66381.1"/>
    <property type="molecule type" value="Genomic_DNA"/>
</dbReference>
<dbReference type="RefSeq" id="XP_011392164.1">
    <property type="nucleotide sequence ID" value="XM_011393862.1"/>
</dbReference>
<dbReference type="SMR" id="Q4P3D8"/>
<dbReference type="FunCoup" id="Q4P3D8">
    <property type="interactions" value="402"/>
</dbReference>
<dbReference type="STRING" id="237631.Q4P3D8"/>
<dbReference type="EnsemblFungi" id="KIS66381">
    <property type="protein sequence ID" value="KIS66381"/>
    <property type="gene ID" value="UMAG_12087"/>
</dbReference>
<dbReference type="GeneID" id="23567854"/>
<dbReference type="KEGG" id="uma:UMAG_12087"/>
<dbReference type="VEuPathDB" id="FungiDB:UMAG_12087"/>
<dbReference type="eggNOG" id="KOG1159">
    <property type="taxonomic scope" value="Eukaryota"/>
</dbReference>
<dbReference type="InParanoid" id="Q4P3D8"/>
<dbReference type="OrthoDB" id="1856718at2759"/>
<dbReference type="Proteomes" id="UP000000561">
    <property type="component" value="Chromosome 19"/>
</dbReference>
<dbReference type="GO" id="GO:0005829">
    <property type="term" value="C:cytosol"/>
    <property type="evidence" value="ECO:0000318"/>
    <property type="project" value="GO_Central"/>
</dbReference>
<dbReference type="GO" id="GO:0005739">
    <property type="term" value="C:mitochondrion"/>
    <property type="evidence" value="ECO:0007669"/>
    <property type="project" value="UniProtKB-SubCell"/>
</dbReference>
<dbReference type="GO" id="GO:0050660">
    <property type="term" value="F:flavin adenine dinucleotide binding"/>
    <property type="evidence" value="ECO:0000318"/>
    <property type="project" value="GO_Central"/>
</dbReference>
<dbReference type="GO" id="GO:0010181">
    <property type="term" value="F:FMN binding"/>
    <property type="evidence" value="ECO:0000318"/>
    <property type="project" value="GO_Central"/>
</dbReference>
<dbReference type="GO" id="GO:0050661">
    <property type="term" value="F:NADP binding"/>
    <property type="evidence" value="ECO:0007669"/>
    <property type="project" value="UniProtKB-UniRule"/>
</dbReference>
<dbReference type="GO" id="GO:0003958">
    <property type="term" value="F:NADPH-hemoprotein reductase activity"/>
    <property type="evidence" value="ECO:0007669"/>
    <property type="project" value="InterPro"/>
</dbReference>
<dbReference type="GO" id="GO:0016491">
    <property type="term" value="F:oxidoreductase activity"/>
    <property type="evidence" value="ECO:0000318"/>
    <property type="project" value="GO_Central"/>
</dbReference>
<dbReference type="GO" id="GO:0016226">
    <property type="term" value="P:iron-sulfur cluster assembly"/>
    <property type="evidence" value="ECO:0007669"/>
    <property type="project" value="UniProtKB-UniRule"/>
</dbReference>
<dbReference type="FunFam" id="1.20.990.10:FF:000001">
    <property type="entry name" value="NADPH--cytochrome P450 reductase"/>
    <property type="match status" value="1"/>
</dbReference>
<dbReference type="FunFam" id="3.40.50.360:FF:000056">
    <property type="entry name" value="NADPH-dependent diflavin oxidoreductase 1"/>
    <property type="match status" value="1"/>
</dbReference>
<dbReference type="FunFam" id="3.40.50.80:FF:000030">
    <property type="entry name" value="NADPH-dependent diflavin oxidoreductase 1"/>
    <property type="match status" value="1"/>
</dbReference>
<dbReference type="Gene3D" id="3.40.50.360">
    <property type="match status" value="1"/>
</dbReference>
<dbReference type="Gene3D" id="1.20.990.10">
    <property type="entry name" value="NADPH-cytochrome p450 Reductase, Chain A, domain 3"/>
    <property type="match status" value="1"/>
</dbReference>
<dbReference type="Gene3D" id="3.40.50.80">
    <property type="entry name" value="Nucleotide-binding domain of ferredoxin-NADP reductase (FNR) module"/>
    <property type="match status" value="1"/>
</dbReference>
<dbReference type="Gene3D" id="2.40.30.10">
    <property type="entry name" value="Translation factors"/>
    <property type="match status" value="1"/>
</dbReference>
<dbReference type="HAMAP" id="MF_03178">
    <property type="entry name" value="NDOR1"/>
    <property type="match status" value="1"/>
</dbReference>
<dbReference type="InterPro" id="IPR003097">
    <property type="entry name" value="CysJ-like_FAD-binding"/>
</dbReference>
<dbReference type="InterPro" id="IPR017927">
    <property type="entry name" value="FAD-bd_FR_type"/>
</dbReference>
<dbReference type="InterPro" id="IPR001094">
    <property type="entry name" value="Flavdoxin-like"/>
</dbReference>
<dbReference type="InterPro" id="IPR008254">
    <property type="entry name" value="Flavodoxin/NO_synth"/>
</dbReference>
<dbReference type="InterPro" id="IPR001709">
    <property type="entry name" value="Flavoprot_Pyr_Nucl_cyt_Rdtase"/>
</dbReference>
<dbReference type="InterPro" id="IPR029039">
    <property type="entry name" value="Flavoprotein-like_sf"/>
</dbReference>
<dbReference type="InterPro" id="IPR039261">
    <property type="entry name" value="FNR_nucleotide-bd"/>
</dbReference>
<dbReference type="InterPro" id="IPR023173">
    <property type="entry name" value="NADPH_Cyt_P450_Rdtase_alpha"/>
</dbReference>
<dbReference type="InterPro" id="IPR028879">
    <property type="entry name" value="NDOR1"/>
</dbReference>
<dbReference type="InterPro" id="IPR001433">
    <property type="entry name" value="OxRdtase_FAD/NAD-bd"/>
</dbReference>
<dbReference type="InterPro" id="IPR017938">
    <property type="entry name" value="Riboflavin_synthase-like_b-brl"/>
</dbReference>
<dbReference type="PANTHER" id="PTHR19384:SF10">
    <property type="entry name" value="NADPH-DEPENDENT DIFLAVIN OXIDOREDUCTASE 1"/>
    <property type="match status" value="1"/>
</dbReference>
<dbReference type="PANTHER" id="PTHR19384">
    <property type="entry name" value="NITRIC OXIDE SYNTHASE-RELATED"/>
    <property type="match status" value="1"/>
</dbReference>
<dbReference type="Pfam" id="PF00667">
    <property type="entry name" value="FAD_binding_1"/>
    <property type="match status" value="1"/>
</dbReference>
<dbReference type="Pfam" id="PF00258">
    <property type="entry name" value="Flavodoxin_1"/>
    <property type="match status" value="1"/>
</dbReference>
<dbReference type="Pfam" id="PF00175">
    <property type="entry name" value="NAD_binding_1"/>
    <property type="match status" value="1"/>
</dbReference>
<dbReference type="PRINTS" id="PR00369">
    <property type="entry name" value="FLAVODOXIN"/>
</dbReference>
<dbReference type="PRINTS" id="PR00371">
    <property type="entry name" value="FPNCR"/>
</dbReference>
<dbReference type="SUPFAM" id="SSF52343">
    <property type="entry name" value="Ferredoxin reductase-like, C-terminal NADP-linked domain"/>
    <property type="match status" value="1"/>
</dbReference>
<dbReference type="SUPFAM" id="SSF52218">
    <property type="entry name" value="Flavoproteins"/>
    <property type="match status" value="1"/>
</dbReference>
<dbReference type="SUPFAM" id="SSF63380">
    <property type="entry name" value="Riboflavin synthase domain-like"/>
    <property type="match status" value="1"/>
</dbReference>
<dbReference type="PROSITE" id="PS51384">
    <property type="entry name" value="FAD_FR"/>
    <property type="match status" value="1"/>
</dbReference>
<dbReference type="PROSITE" id="PS50902">
    <property type="entry name" value="FLAVODOXIN_LIKE"/>
    <property type="match status" value="1"/>
</dbReference>
<comment type="function">
    <text evidence="1">NADPH-dependent reductase which is a central component of the cytosolic iron-sulfur (Fe-S) protein assembly (CIA) machinery. Transfers electrons from NADPH via its FAD and FMN prosthetic groups to the [2Fe-2S] cluster of DRE2, another key component of the CIA machinery. In turn, this reduced cluster provides electrons for assembly of cytosolic iron-sulfur cluster proteins. Positively controls H(2)O(2)-induced cell death.</text>
</comment>
<comment type="catalytic activity">
    <reaction evidence="1">
        <text>2 oxidized [2Fe-2S]-[protein] + NADPH = 2 reduced [2Fe-2S]-[protein] + NADP(+) + H(+)</text>
        <dbReference type="Rhea" id="RHEA:67716"/>
        <dbReference type="Rhea" id="RHEA-COMP:17327"/>
        <dbReference type="Rhea" id="RHEA-COMP:17328"/>
        <dbReference type="ChEBI" id="CHEBI:15378"/>
        <dbReference type="ChEBI" id="CHEBI:33737"/>
        <dbReference type="ChEBI" id="CHEBI:33738"/>
        <dbReference type="ChEBI" id="CHEBI:57783"/>
        <dbReference type="ChEBI" id="CHEBI:58349"/>
    </reaction>
    <physiologicalReaction direction="left-to-right" evidence="1">
        <dbReference type="Rhea" id="RHEA:67717"/>
    </physiologicalReaction>
</comment>
<comment type="cofactor">
    <cofactor evidence="1">
        <name>FAD</name>
        <dbReference type="ChEBI" id="CHEBI:57692"/>
    </cofactor>
</comment>
<comment type="cofactor">
    <cofactor evidence="1">
        <name>FMN</name>
        <dbReference type="ChEBI" id="CHEBI:58210"/>
    </cofactor>
</comment>
<comment type="subunit">
    <text evidence="1">Interacts with DRE2; as part of the cytosolic iron-sulfur (Fe-S) protein assembly (CIA) machinery.</text>
</comment>
<comment type="subcellular location">
    <subcellularLocation>
        <location evidence="1">Cytoplasm</location>
    </subcellularLocation>
    <subcellularLocation>
        <location evidence="1">Mitochondrion</location>
    </subcellularLocation>
    <text evidence="1">Relocalizes to mitochondria after H(2)O(2) exposure.</text>
</comment>
<comment type="similarity">
    <text evidence="1">Belongs to the NADPH-dependent diflavin oxidoreductase NDOR1 family.</text>
</comment>
<comment type="similarity">
    <text evidence="1">In the N-terminal section; belongs to the flavodoxin family.</text>
</comment>
<comment type="similarity">
    <text evidence="1">In the C-terminal section; belongs to the flavoprotein pyridine nucleotide cytochrome reductase family.</text>
</comment>
<feature type="chain" id="PRO_0000167622" description="NADPH-dependent diflavin oxidoreductase 1">
    <location>
        <begin position="1"/>
        <end position="658"/>
    </location>
</feature>
<feature type="domain" description="Flavodoxin-like" evidence="1">
    <location>
        <begin position="16"/>
        <end position="160"/>
    </location>
</feature>
<feature type="domain" description="FAD-binding FR-type" evidence="1">
    <location>
        <begin position="215"/>
        <end position="502"/>
    </location>
</feature>
<feature type="binding site" evidence="1">
    <location>
        <begin position="22"/>
        <end position="27"/>
    </location>
    <ligand>
        <name>FMN</name>
        <dbReference type="ChEBI" id="CHEBI:58210"/>
    </ligand>
</feature>
<feature type="binding site" evidence="1">
    <location>
        <begin position="69"/>
        <end position="72"/>
    </location>
    <ligand>
        <name>FMN</name>
        <dbReference type="ChEBI" id="CHEBI:58210"/>
    </ligand>
</feature>
<feature type="binding site" evidence="1">
    <location>
        <begin position="107"/>
        <end position="116"/>
    </location>
    <ligand>
        <name>FMN</name>
        <dbReference type="ChEBI" id="CHEBI:58210"/>
    </ligand>
</feature>
<feature type="binding site" evidence="1">
    <location>
        <position position="142"/>
    </location>
    <ligand>
        <name>FMN</name>
        <dbReference type="ChEBI" id="CHEBI:58210"/>
    </ligand>
</feature>
<feature type="binding site" evidence="1">
    <location>
        <position position="400"/>
    </location>
    <ligand>
        <name>FAD</name>
        <dbReference type="ChEBI" id="CHEBI:57692"/>
    </ligand>
</feature>
<feature type="binding site" evidence="1">
    <location>
        <begin position="430"/>
        <end position="433"/>
    </location>
    <ligand>
        <name>FAD</name>
        <dbReference type="ChEBI" id="CHEBI:57692"/>
    </ligand>
</feature>
<feature type="binding site" evidence="1">
    <location>
        <begin position="474"/>
        <end position="477"/>
    </location>
    <ligand>
        <name>FAD</name>
        <dbReference type="ChEBI" id="CHEBI:57692"/>
    </ligand>
</feature>
<feature type="binding site" evidence="1">
    <location>
        <position position="514"/>
    </location>
    <ligand>
        <name>NADP(+)</name>
        <dbReference type="ChEBI" id="CHEBI:58349"/>
    </ligand>
</feature>
<feature type="binding site" evidence="1">
    <location>
        <begin position="574"/>
        <end position="575"/>
    </location>
    <ligand>
        <name>NADP(+)</name>
        <dbReference type="ChEBI" id="CHEBI:58349"/>
    </ligand>
</feature>
<feature type="binding site" evidence="1">
    <location>
        <begin position="580"/>
        <end position="584"/>
    </location>
    <ligand>
        <name>NADP(+)</name>
        <dbReference type="ChEBI" id="CHEBI:58349"/>
    </ligand>
</feature>
<feature type="binding site" evidence="1">
    <location>
        <position position="657"/>
    </location>
    <ligand>
        <name>FAD</name>
        <dbReference type="ChEBI" id="CHEBI:57692"/>
    </ligand>
</feature>
<gene>
    <name evidence="1" type="primary">TAH18</name>
    <name type="ORF">UMAG_12087</name>
</gene>
<name>NDOR1_MYCMD</name>
<protein>
    <recommendedName>
        <fullName evidence="1">NADPH-dependent diflavin oxidoreductase 1</fullName>
        <ecNumber evidence="1">1.18.1.-</ecNumber>
    </recommendedName>
    <alternativeName>
        <fullName evidence="1">NADPH-dependent FMN and FAD-containing oxidoreductase</fullName>
    </alternativeName>
</protein>
<sequence length="658" mass="74482">MTSIRTSNCASEGRRLTILYMTQTGTSSDLALRISRQAQRKRFHVTIADVCSYDPTDLVSESLMLFLVSTTGQGEFPTTSRPFWNFLLRKGIPEDILEDVTFAAFGLGDSTYPRFCWPVRLLSRRLRGLGAKELVEHGEGDDMHYLGLEGELGPWMNRFWRKLDELCPLEAGVREVGRDELLPPSVTVTKVETEEGRLKEKHDGRDALGRHLEDQGWSISILDKNQRMTATDHFQDVRLLEFVRLNQTDVEEDKRQIGENEEISRGSASALDGISIQTYRPGDILCLHPINDAASVTEMLSRLDLDADTLVSLAGSTIPSTVPQSPAHMSVRDLLTHHLDFTSVPTNSFFEQIRLFSPTGSQEREKLDEYCGIFPEEELAKGANPQDGIDEMYEYAQRPRRTIKEVLDEFKSVQVPLAYIADVLPWIKPREFSIASAPPANSEREKRVSEEPHAIQLSVAMVKYKTRLRKARTGLCTRWLSSLPLGSRVPVVIKPGYLTLPPAQAPLILIGPGTGCAPLRSLVIDRLSNSTLARSEIHLFLGFRYRTKDYLFQHDWQHLQQSYANQFHLHTAFSRDGEAKTYVQDLIVKPDNAHVLWEAITERNAWIVVAGASGKMPEQVRGAFESIARSQGGMDEEQAKRFMDALERQRRWQEECWG</sequence>
<accession>Q4P3D8</accession>
<accession>A0A0D1DQZ6</accession>